<comment type="subcellular location">
    <subcellularLocation>
        <location evidence="1">Cell inner membrane</location>
        <topology evidence="1">Multi-pass membrane protein</topology>
    </subcellularLocation>
</comment>
<comment type="similarity">
    <text evidence="1">Belongs to the UPF0266 family.</text>
</comment>
<protein>
    <recommendedName>
        <fullName evidence="1">UPF0266 membrane protein YobD</fullName>
    </recommendedName>
</protein>
<organism>
    <name type="scientific">Salmonella paratyphi C (strain RKS4594)</name>
    <dbReference type="NCBI Taxonomy" id="476213"/>
    <lineage>
        <taxon>Bacteria</taxon>
        <taxon>Pseudomonadati</taxon>
        <taxon>Pseudomonadota</taxon>
        <taxon>Gammaproteobacteria</taxon>
        <taxon>Enterobacterales</taxon>
        <taxon>Enterobacteriaceae</taxon>
        <taxon>Salmonella</taxon>
    </lineage>
</organism>
<name>YOBD_SALPC</name>
<accession>C0Q301</accession>
<reference key="1">
    <citation type="journal article" date="2009" name="PLoS ONE">
        <title>Salmonella paratyphi C: genetic divergence from Salmonella choleraesuis and pathogenic convergence with Salmonella typhi.</title>
        <authorList>
            <person name="Liu W.-Q."/>
            <person name="Feng Y."/>
            <person name="Wang Y."/>
            <person name="Zou Q.-H."/>
            <person name="Chen F."/>
            <person name="Guo J.-T."/>
            <person name="Peng Y.-H."/>
            <person name="Jin Y."/>
            <person name="Li Y.-G."/>
            <person name="Hu S.-N."/>
            <person name="Johnston R.N."/>
            <person name="Liu G.-R."/>
            <person name="Liu S.-L."/>
        </authorList>
    </citation>
    <scope>NUCLEOTIDE SEQUENCE [LARGE SCALE GENOMIC DNA]</scope>
    <source>
        <strain>RKS4594</strain>
    </source>
</reference>
<sequence>MTITDLLLILFIAALLAYALYDQFIMPRRNGPTLLSIALLRRGRVDSVIFVGLVAILIYNNVTSHGAQMTTWLLSALALMGFYIFWIRTPRIIFKQRGFFFANVWIEYNRIKEMNLSEDGVLVMQLEQRRLLIRVRNIDDLEKIYKLLIENQ</sequence>
<dbReference type="EMBL" id="CP000857">
    <property type="protein sequence ID" value="ACN46033.1"/>
    <property type="molecule type" value="Genomic_DNA"/>
</dbReference>
<dbReference type="RefSeq" id="WP_000156241.1">
    <property type="nucleotide sequence ID" value="NC_012125.1"/>
</dbReference>
<dbReference type="KEGG" id="sei:SPC_1896"/>
<dbReference type="HOGENOM" id="CLU_133645_0_0_6"/>
<dbReference type="Proteomes" id="UP000001599">
    <property type="component" value="Chromosome"/>
</dbReference>
<dbReference type="GO" id="GO:0005886">
    <property type="term" value="C:plasma membrane"/>
    <property type="evidence" value="ECO:0007669"/>
    <property type="project" value="UniProtKB-SubCell"/>
</dbReference>
<dbReference type="HAMAP" id="MF_01071">
    <property type="entry name" value="UPF0266"/>
    <property type="match status" value="1"/>
</dbReference>
<dbReference type="InterPro" id="IPR009328">
    <property type="entry name" value="DUF986"/>
</dbReference>
<dbReference type="NCBIfam" id="NF002791">
    <property type="entry name" value="PRK02913.1"/>
    <property type="match status" value="1"/>
</dbReference>
<dbReference type="Pfam" id="PF06173">
    <property type="entry name" value="DUF986"/>
    <property type="match status" value="1"/>
</dbReference>
<dbReference type="PIRSF" id="PIRSF020687">
    <property type="entry name" value="UCP020687"/>
    <property type="match status" value="1"/>
</dbReference>
<keyword id="KW-0997">Cell inner membrane</keyword>
<keyword id="KW-1003">Cell membrane</keyword>
<keyword id="KW-0472">Membrane</keyword>
<keyword id="KW-0812">Transmembrane</keyword>
<keyword id="KW-1133">Transmembrane helix</keyword>
<gene>
    <name evidence="1" type="primary">yobD</name>
    <name type="ordered locus">SPC_1896</name>
</gene>
<proteinExistence type="inferred from homology"/>
<feature type="chain" id="PRO_1000149758" description="UPF0266 membrane protein YobD">
    <location>
        <begin position="1"/>
        <end position="152"/>
    </location>
</feature>
<feature type="transmembrane region" description="Helical" evidence="1">
    <location>
        <begin position="6"/>
        <end position="26"/>
    </location>
</feature>
<feature type="transmembrane region" description="Helical" evidence="1">
    <location>
        <begin position="45"/>
        <end position="65"/>
    </location>
</feature>
<feature type="transmembrane region" description="Helical" evidence="1">
    <location>
        <begin position="67"/>
        <end position="87"/>
    </location>
</feature>
<evidence type="ECO:0000255" key="1">
    <source>
        <dbReference type="HAMAP-Rule" id="MF_01071"/>
    </source>
</evidence>